<sequence length="57" mass="6568">MGQEQGTPWIQSTGHISTQKEEDGQKIPKLEHRNSTQLMGHYQKTMNQVAMPKQIVY</sequence>
<organism>
    <name type="scientific">Influenza A virus (strain A/New Zealand:South Canterbury/35/2000 H1N1)</name>
    <dbReference type="NCBI Taxonomy" id="363066"/>
    <lineage>
        <taxon>Viruses</taxon>
        <taxon>Riboviria</taxon>
        <taxon>Orthornavirae</taxon>
        <taxon>Negarnaviricota</taxon>
        <taxon>Polyploviricotina</taxon>
        <taxon>Insthoviricetes</taxon>
        <taxon>Articulavirales</taxon>
        <taxon>Orthomyxoviridae</taxon>
        <taxon>Alphainfluenzavirus</taxon>
        <taxon>Alphainfluenzavirus influenzae</taxon>
        <taxon>Influenza A virus</taxon>
    </lineage>
</organism>
<reference key="1">
    <citation type="submission" date="2006-03" db="EMBL/GenBank/DDBJ databases">
        <title>The NIAID influenza genome sequencing project.</title>
        <authorList>
            <person name="Ghedin E."/>
            <person name="Spiro D."/>
            <person name="Sengamalay N."/>
            <person name="Zaborsky J."/>
            <person name="Feldblyum T."/>
            <person name="Subbu V."/>
            <person name="Sparenborg J."/>
            <person name="Groveman L."/>
            <person name="Halpin R."/>
            <person name="Shumway M."/>
            <person name="Sitz J."/>
            <person name="Katzel D."/>
            <person name="Koo H."/>
            <person name="Salzberg S.L."/>
            <person name="Jennings L."/>
            <person name="Smit M."/>
            <person name="Wells V."/>
            <person name="Bao Y."/>
            <person name="Bolotov P."/>
            <person name="Dernovoy D."/>
            <person name="Kiryutin B."/>
            <person name="Lipman D.J."/>
            <person name="Tatusova T."/>
        </authorList>
    </citation>
    <scope>NUCLEOTIDE SEQUENCE [GENOMIC RNA]</scope>
</reference>
<reference key="2">
    <citation type="submission" date="2006-03" db="EMBL/GenBank/DDBJ databases">
        <authorList>
            <consortium name="The NIAID Influenza Genome Sequencing Consortium"/>
        </authorList>
    </citation>
    <scope>NUCLEOTIDE SEQUENCE [GENOMIC RNA]</scope>
</reference>
<protein>
    <recommendedName>
        <fullName evidence="1">Protein PB1-F2</fullName>
    </recommendedName>
</protein>
<proteinExistence type="inferred from homology"/>
<accession>Q289L8</accession>
<keyword id="KW-1035">Host cytoplasm</keyword>
<keyword id="KW-1048">Host nucleus</keyword>
<comment type="function">
    <text evidence="1">May play an important role in promoting lung pathology in both primary viral infection and secondary bacterial infection.</text>
</comment>
<comment type="subcellular location">
    <subcellularLocation>
        <location evidence="1">Host nucleus</location>
    </subcellularLocation>
    <subcellularLocation>
        <location evidence="1">Host cytoplasm</location>
        <location evidence="1">Host cytosol</location>
    </subcellularLocation>
</comment>
<comment type="miscellaneous">
    <text>Is not encoded in all strains, and seems to be dispensable for replication.</text>
</comment>
<comment type="similarity">
    <text evidence="1">Belongs to the influenza viruses PB1-F2 family.</text>
</comment>
<dbReference type="EMBL" id="CY009210">
    <property type="protein sequence ID" value="ABD61527.1"/>
    <property type="molecule type" value="Genomic_RNA"/>
</dbReference>
<dbReference type="SMR" id="Q289L8"/>
<dbReference type="Proteomes" id="UP001366552">
    <property type="component" value="Genome"/>
</dbReference>
<dbReference type="GO" id="GO:0044164">
    <property type="term" value="C:host cell cytosol"/>
    <property type="evidence" value="ECO:0007669"/>
    <property type="project" value="UniProtKB-SubCell"/>
</dbReference>
<dbReference type="GO" id="GO:0042025">
    <property type="term" value="C:host cell nucleus"/>
    <property type="evidence" value="ECO:0007669"/>
    <property type="project" value="UniProtKB-SubCell"/>
</dbReference>
<dbReference type="GO" id="GO:0016020">
    <property type="term" value="C:membrane"/>
    <property type="evidence" value="ECO:0007669"/>
    <property type="project" value="UniProtKB-UniRule"/>
</dbReference>
<dbReference type="GO" id="GO:0039545">
    <property type="term" value="P:symbiont-mediated suppression of host cytoplasmic pattern recognition receptor signaling pathway via inhibition of MAVS activity"/>
    <property type="evidence" value="ECO:0000250"/>
    <property type="project" value="UniProtKB"/>
</dbReference>
<dbReference type="HAMAP" id="MF_04064">
    <property type="entry name" value="INFV_PB1F2"/>
    <property type="match status" value="1"/>
</dbReference>
<dbReference type="InterPro" id="IPR021045">
    <property type="entry name" value="Flu_proapoptotic_PB1-F2"/>
</dbReference>
<dbReference type="Pfam" id="PF11986">
    <property type="entry name" value="PB1-F2"/>
    <property type="match status" value="1"/>
</dbReference>
<organismHost>
    <name type="scientific">Aves</name>
    <dbReference type="NCBI Taxonomy" id="8782"/>
</organismHost>
<organismHost>
    <name type="scientific">Homo sapiens</name>
    <name type="common">Human</name>
    <dbReference type="NCBI Taxonomy" id="9606"/>
</organismHost>
<organismHost>
    <name type="scientific">Sus scrofa</name>
    <name type="common">Pig</name>
    <dbReference type="NCBI Taxonomy" id="9823"/>
</organismHost>
<gene>
    <name evidence="1" type="primary">PB1</name>
    <name type="synonym">PB1-F2</name>
</gene>
<evidence type="ECO:0000255" key="1">
    <source>
        <dbReference type="HAMAP-Rule" id="MF_04064"/>
    </source>
</evidence>
<evidence type="ECO:0000256" key="2">
    <source>
        <dbReference type="SAM" id="MobiDB-lite"/>
    </source>
</evidence>
<name>PB1F2_I00A1</name>
<feature type="chain" id="PRO_0000373010" description="Protein PB1-F2">
    <location>
        <begin position="1"/>
        <end position="57"/>
    </location>
</feature>
<feature type="region of interest" description="Disordered" evidence="2">
    <location>
        <begin position="1"/>
        <end position="35"/>
    </location>
</feature>
<feature type="compositionally biased region" description="Polar residues" evidence="2">
    <location>
        <begin position="1"/>
        <end position="17"/>
    </location>
</feature>
<feature type="compositionally biased region" description="Basic and acidic residues" evidence="2">
    <location>
        <begin position="18"/>
        <end position="34"/>
    </location>
</feature>